<accession>B7N8W5</accession>
<sequence>MHCPFCFAVDTKVIDSRLVGEGSSVRRRRQCLVCNERFTTFEVAELVMPRVVKSNDVREPFNEEKLRSGMLRALEKRPVSSDDVEMAINHIKSQLRATGEREVPSKMIGNLVMEQLKKLDKVAYIRFASVYRSFEDIKEFGEEIARLED</sequence>
<reference key="1">
    <citation type="journal article" date="2009" name="PLoS Genet.">
        <title>Organised genome dynamics in the Escherichia coli species results in highly diverse adaptive paths.</title>
        <authorList>
            <person name="Touchon M."/>
            <person name="Hoede C."/>
            <person name="Tenaillon O."/>
            <person name="Barbe V."/>
            <person name="Baeriswyl S."/>
            <person name="Bidet P."/>
            <person name="Bingen E."/>
            <person name="Bonacorsi S."/>
            <person name="Bouchier C."/>
            <person name="Bouvet O."/>
            <person name="Calteau A."/>
            <person name="Chiapello H."/>
            <person name="Clermont O."/>
            <person name="Cruveiller S."/>
            <person name="Danchin A."/>
            <person name="Diard M."/>
            <person name="Dossat C."/>
            <person name="Karoui M.E."/>
            <person name="Frapy E."/>
            <person name="Garry L."/>
            <person name="Ghigo J.M."/>
            <person name="Gilles A.M."/>
            <person name="Johnson J."/>
            <person name="Le Bouguenec C."/>
            <person name="Lescat M."/>
            <person name="Mangenot S."/>
            <person name="Martinez-Jehanne V."/>
            <person name="Matic I."/>
            <person name="Nassif X."/>
            <person name="Oztas S."/>
            <person name="Petit M.A."/>
            <person name="Pichon C."/>
            <person name="Rouy Z."/>
            <person name="Ruf C.S."/>
            <person name="Schneider D."/>
            <person name="Tourret J."/>
            <person name="Vacherie B."/>
            <person name="Vallenet D."/>
            <person name="Medigue C."/>
            <person name="Rocha E.P.C."/>
            <person name="Denamur E."/>
        </authorList>
    </citation>
    <scope>NUCLEOTIDE SEQUENCE [LARGE SCALE GENOMIC DNA]</scope>
    <source>
        <strain>UMN026 / ExPEC</strain>
    </source>
</reference>
<proteinExistence type="inferred from homology"/>
<name>NRDR_ECOLU</name>
<evidence type="ECO:0000255" key="1">
    <source>
        <dbReference type="HAMAP-Rule" id="MF_00440"/>
    </source>
</evidence>
<protein>
    <recommendedName>
        <fullName evidence="1">Transcriptional repressor NrdR</fullName>
    </recommendedName>
</protein>
<organism>
    <name type="scientific">Escherichia coli O17:K52:H18 (strain UMN026 / ExPEC)</name>
    <dbReference type="NCBI Taxonomy" id="585056"/>
    <lineage>
        <taxon>Bacteria</taxon>
        <taxon>Pseudomonadati</taxon>
        <taxon>Pseudomonadota</taxon>
        <taxon>Gammaproteobacteria</taxon>
        <taxon>Enterobacterales</taxon>
        <taxon>Enterobacteriaceae</taxon>
        <taxon>Escherichia</taxon>
    </lineage>
</organism>
<comment type="function">
    <text evidence="1">Negatively regulates transcription of bacterial ribonucleotide reductase nrd genes and operons by binding to NrdR-boxes.</text>
</comment>
<comment type="cofactor">
    <cofactor evidence="1">
        <name>Zn(2+)</name>
        <dbReference type="ChEBI" id="CHEBI:29105"/>
    </cofactor>
    <text evidence="1">Binds 1 zinc ion.</text>
</comment>
<comment type="similarity">
    <text evidence="1">Belongs to the NrdR family.</text>
</comment>
<keyword id="KW-0067">ATP-binding</keyword>
<keyword id="KW-0238">DNA-binding</keyword>
<keyword id="KW-0479">Metal-binding</keyword>
<keyword id="KW-0547">Nucleotide-binding</keyword>
<keyword id="KW-0678">Repressor</keyword>
<keyword id="KW-0804">Transcription</keyword>
<keyword id="KW-0805">Transcription regulation</keyword>
<keyword id="KW-0862">Zinc</keyword>
<keyword id="KW-0863">Zinc-finger</keyword>
<dbReference type="EMBL" id="CU928163">
    <property type="protein sequence ID" value="CAR11666.1"/>
    <property type="molecule type" value="Genomic_DNA"/>
</dbReference>
<dbReference type="RefSeq" id="WP_000543535.1">
    <property type="nucleotide sequence ID" value="NC_011751.1"/>
</dbReference>
<dbReference type="RefSeq" id="YP_002411214.1">
    <property type="nucleotide sequence ID" value="NC_011751.1"/>
</dbReference>
<dbReference type="SMR" id="B7N8W5"/>
<dbReference type="STRING" id="585056.ECUMN_0451"/>
<dbReference type="GeneID" id="93777047"/>
<dbReference type="KEGG" id="eum:ECUMN_0451"/>
<dbReference type="PATRIC" id="fig|585056.7.peg.654"/>
<dbReference type="HOGENOM" id="CLU_108412_0_0_6"/>
<dbReference type="Proteomes" id="UP000007097">
    <property type="component" value="Chromosome"/>
</dbReference>
<dbReference type="GO" id="GO:0005524">
    <property type="term" value="F:ATP binding"/>
    <property type="evidence" value="ECO:0007669"/>
    <property type="project" value="UniProtKB-KW"/>
</dbReference>
<dbReference type="GO" id="GO:0003677">
    <property type="term" value="F:DNA binding"/>
    <property type="evidence" value="ECO:0007669"/>
    <property type="project" value="UniProtKB-KW"/>
</dbReference>
<dbReference type="GO" id="GO:0008270">
    <property type="term" value="F:zinc ion binding"/>
    <property type="evidence" value="ECO:0007669"/>
    <property type="project" value="UniProtKB-UniRule"/>
</dbReference>
<dbReference type="GO" id="GO:0045892">
    <property type="term" value="P:negative regulation of DNA-templated transcription"/>
    <property type="evidence" value="ECO:0007669"/>
    <property type="project" value="UniProtKB-UniRule"/>
</dbReference>
<dbReference type="HAMAP" id="MF_00440">
    <property type="entry name" value="NrdR"/>
    <property type="match status" value="1"/>
</dbReference>
<dbReference type="InterPro" id="IPR005144">
    <property type="entry name" value="ATP-cone_dom"/>
</dbReference>
<dbReference type="InterPro" id="IPR055173">
    <property type="entry name" value="NrdR-like_N"/>
</dbReference>
<dbReference type="InterPro" id="IPR003796">
    <property type="entry name" value="RNR_NrdR-like"/>
</dbReference>
<dbReference type="NCBIfam" id="TIGR00244">
    <property type="entry name" value="transcriptional regulator NrdR"/>
    <property type="match status" value="1"/>
</dbReference>
<dbReference type="PANTHER" id="PTHR30455">
    <property type="entry name" value="TRANSCRIPTIONAL REPRESSOR NRDR"/>
    <property type="match status" value="1"/>
</dbReference>
<dbReference type="PANTHER" id="PTHR30455:SF2">
    <property type="entry name" value="TRANSCRIPTIONAL REPRESSOR NRDR"/>
    <property type="match status" value="1"/>
</dbReference>
<dbReference type="Pfam" id="PF03477">
    <property type="entry name" value="ATP-cone"/>
    <property type="match status" value="1"/>
</dbReference>
<dbReference type="Pfam" id="PF22811">
    <property type="entry name" value="Zn_ribbon_NrdR"/>
    <property type="match status" value="1"/>
</dbReference>
<dbReference type="PROSITE" id="PS51161">
    <property type="entry name" value="ATP_CONE"/>
    <property type="match status" value="1"/>
</dbReference>
<gene>
    <name evidence="1" type="primary">nrdR</name>
    <name type="ordered locus">ECUMN_0451</name>
</gene>
<feature type="chain" id="PRO_1000124503" description="Transcriptional repressor NrdR">
    <location>
        <begin position="1"/>
        <end position="149"/>
    </location>
</feature>
<feature type="domain" description="ATP-cone" evidence="1">
    <location>
        <begin position="49"/>
        <end position="139"/>
    </location>
</feature>
<feature type="zinc finger region" evidence="1">
    <location>
        <begin position="3"/>
        <end position="34"/>
    </location>
</feature>